<comment type="function">
    <text evidence="5">Catalyzes the decarboxylation of carboxynorspermidine and carboxyspermidine. 2,3-diaminopropionic acid, 2,4-diaminobutyric acid, L-ornithine or L-lysine cannot serve as substrates.</text>
</comment>
<comment type="catalytic activity">
    <reaction evidence="3 4 5">
        <text>carboxynorspermidine + H(+) = norspermidine + CO2</text>
        <dbReference type="Rhea" id="RHEA:34099"/>
        <dbReference type="ChEBI" id="CHEBI:15378"/>
        <dbReference type="ChEBI" id="CHEBI:16526"/>
        <dbReference type="ChEBI" id="CHEBI:57920"/>
        <dbReference type="ChEBI" id="CHEBI:65070"/>
        <dbReference type="EC" id="4.1.1.96"/>
    </reaction>
</comment>
<comment type="catalytic activity">
    <reaction evidence="3 4 5">
        <text>carboxyspermidine + H(+) = spermidine + CO2</text>
        <dbReference type="Rhea" id="RHEA:34095"/>
        <dbReference type="ChEBI" id="CHEBI:15378"/>
        <dbReference type="ChEBI" id="CHEBI:16526"/>
        <dbReference type="ChEBI" id="CHEBI:57834"/>
        <dbReference type="ChEBI" id="CHEBI:65072"/>
        <dbReference type="EC" id="4.1.1.96"/>
    </reaction>
</comment>
<comment type="cofactor">
    <cofactor evidence="5">
        <name>pyridoxal 5'-phosphate</name>
        <dbReference type="ChEBI" id="CHEBI:597326"/>
    </cofactor>
</comment>
<comment type="activity regulation">
    <text evidence="5">Dithiothreitol greatly stimulates activity, maximum stimulation being at 5-20 mM dithiothreitol concentration. Fe(3+), Fe(2+) and Mn(2+) severely inhibit activity (88%, 82% and 50%, respectively), whereas Zn(2+) has a slightly inhibitory effect (23%) and Mg(2+), Ca(2+), Cu(2+) and Cu(+) have no effect.</text>
</comment>
<comment type="biophysicochemical properties">
    <kinetics>
        <KM evidence="5">175 uM for carboxynorspermidine (at 37 degrees Celsius and pH 8.25)</KM>
        <KM evidence="5">4.8 uM for pyridoxal 5'-phosphate (at 37 degrees Celsius and pH 8.25)</KM>
    </kinetics>
    <phDependence>
        <text evidence="5">Optimum pH is 8.25. Stable at pH 7.5 and 4 degrees Celsius in the presence of DTT, EDTA and NaN(3) for at least one month. 57% and 72% of the maximum activity observed at pH 7.5 and 9.0, respectively.</text>
    </phDependence>
    <temperatureDependence>
        <text evidence="5">Optimum temperature is 37 degrees Celsius. 75% and 51% of the maximum activity remains at 30 and 45 degrees Celsius, respectively, but the activity decreases rapidly at temperatures above 55 or below 20 degrees Celsius.</text>
    </temperatureDependence>
</comment>
<comment type="subunit">
    <text evidence="5">Homodimer.</text>
</comment>
<comment type="subcellular location">
    <subcellularLocation>
        <location evidence="5">Cytoplasm</location>
    </subcellularLocation>
</comment>
<comment type="similarity">
    <text evidence="2">Belongs to the Orn/Lys/Arg decarboxylase class-II family. NspC subfamily.</text>
</comment>
<accession>Q56575</accession>
<keyword id="KW-0963">Cytoplasm</keyword>
<keyword id="KW-0210">Decarboxylase</keyword>
<keyword id="KW-0903">Direct protein sequencing</keyword>
<keyword id="KW-0456">Lyase</keyword>
<keyword id="KW-0620">Polyamine biosynthesis</keyword>
<keyword id="KW-0663">Pyridoxal phosphate</keyword>
<keyword id="KW-0745">Spermidine biosynthesis</keyword>
<reference key="1">
    <citation type="journal article" date="1994" name="Microbiology">
        <title>Cloning and nucleotide sequence of the carboxynorspermidine decarboxylase gene from Vibrio alginolyticus.</title>
        <authorList>
            <person name="Yamamoto S."/>
            <person name="Sugahara T."/>
            <person name="Tougou K."/>
            <person name="Shinoda S."/>
        </authorList>
    </citation>
    <scope>NUCLEOTIDE SEQUENCE [GENOMIC DNA]</scope>
    <scope>PROTEIN SEQUENCE OF 1-20</scope>
    <scope>CATALYTIC ACTIVITY</scope>
    <source>
        <strain>ATCC 17749 / DSM 2171 / NBRC 15630 / NCIMB 1903 / XII-53</strain>
    </source>
</reference>
<reference key="2">
    <citation type="journal article" date="1990" name="J. Gen. Microbiol.">
        <title>Purification and properties of carboxynorspermidine decarboxylase, a novel enzyme involved in norspermidine biosynthesis, from Vibrio alginolyticus.</title>
        <authorList>
            <person name="Nakao H."/>
            <person name="Shinoda S."/>
            <person name="Yamamoto S."/>
        </authorList>
    </citation>
    <scope>FUNCTION</scope>
    <scope>CATALYTIC ACTIVITY</scope>
    <scope>COFACTOR</scope>
    <scope>SUBSTRATE SPECIFICITY</scope>
    <scope>ACTIVITY REGULATION</scope>
    <scope>BIOPHYSICOCHEMICAL PROPERTIES</scope>
    <scope>SUBUNIT</scope>
    <scope>SUBCELLULAR LOCATION</scope>
    <source>
        <strain>ATCC 17749 / DSM 2171 / NBRC 15630 / NCIMB 1903 / XII-53</strain>
    </source>
</reference>
<reference key="3">
    <citation type="journal article" date="1991" name="J. Gen. Microbiol.">
        <title>Purification and some properties of carboxynorspermidine synthase participating in a novel biosynthetic pathway for norspermidine in Vibrio alginolyticus.</title>
        <authorList>
            <person name="Nakao H."/>
            <person name="Shinoda S."/>
            <person name="Yamamoto S."/>
        </authorList>
    </citation>
    <scope>CATALYTIC ACTIVITY</scope>
    <source>
        <strain evidence="3">ATCC 17749</strain>
    </source>
</reference>
<sequence length="377" mass="42045">MQQNELKTPYFSINEDKLIENLEKAKQLKDISGVKLVLALKCFSTWGVFDIIKPYLDGTTSSGPFEVKLGYETFGGETHAYSVGYSEDDVRDVADICDKMIFNSQSQLAAYRHIVEGKASIGLRLNPGVSYAGQDLANPARQFSRLGVQADHIKPEIFDGIDGVMFHMNCENKDVDAFIGLLDAISAQFGEYLDKLDWVSMGGGVFFTWPGYDIEKLGLALKAFAEKHGVQMYLEPGERIITKTTDLVVTVVDIVENVKKTAIVDSATEAHRLDTLIYNEPASILEASENGEHEYVIGSCSCLAGDQFCVANFEQPLEIGQRLHILDSAGYTMVKLNWFNGLRMPSVYCERSNGDIQKLNEFDYSDFKRSLSQWSVI</sequence>
<dbReference type="EC" id="4.1.1.96" evidence="3 4 5"/>
<dbReference type="EMBL" id="D31783">
    <property type="protein sequence ID" value="BAA06561.1"/>
    <property type="molecule type" value="Genomic_DNA"/>
</dbReference>
<dbReference type="SMR" id="Q56575"/>
<dbReference type="STRING" id="663.BAU10_08865"/>
<dbReference type="eggNOG" id="COG0019">
    <property type="taxonomic scope" value="Bacteria"/>
</dbReference>
<dbReference type="BioCyc" id="MetaCyc:MONOMER-13927"/>
<dbReference type="GO" id="GO:0005737">
    <property type="term" value="C:cytoplasm"/>
    <property type="evidence" value="ECO:0007669"/>
    <property type="project" value="UniProtKB-SubCell"/>
</dbReference>
<dbReference type="GO" id="GO:0016831">
    <property type="term" value="F:carboxy-lyase activity"/>
    <property type="evidence" value="ECO:0000314"/>
    <property type="project" value="UniProtKB"/>
</dbReference>
<dbReference type="GO" id="GO:0008836">
    <property type="term" value="F:diaminopimelate decarboxylase activity"/>
    <property type="evidence" value="ECO:0007669"/>
    <property type="project" value="TreeGrafter"/>
</dbReference>
<dbReference type="GO" id="GO:0009089">
    <property type="term" value="P:lysine biosynthetic process via diaminopimelate"/>
    <property type="evidence" value="ECO:0007669"/>
    <property type="project" value="TreeGrafter"/>
</dbReference>
<dbReference type="GO" id="GO:0045312">
    <property type="term" value="P:nor-spermidine biosynthetic process"/>
    <property type="evidence" value="ECO:0000314"/>
    <property type="project" value="UniProtKB"/>
</dbReference>
<dbReference type="GO" id="GO:0008295">
    <property type="term" value="P:spermidine biosynthetic process"/>
    <property type="evidence" value="ECO:0000314"/>
    <property type="project" value="UniProtKB"/>
</dbReference>
<dbReference type="CDD" id="cd06829">
    <property type="entry name" value="PLPDE_III_CANSDC"/>
    <property type="match status" value="1"/>
</dbReference>
<dbReference type="FunFam" id="2.40.37.10:FF:000016">
    <property type="entry name" value="Carboxynorspermidine/carboxyspermidine decarboxylase"/>
    <property type="match status" value="1"/>
</dbReference>
<dbReference type="FunFam" id="3.20.20.10:FF:000012">
    <property type="entry name" value="Carboxynorspermidine/carboxyspermidine decarboxylase"/>
    <property type="match status" value="1"/>
</dbReference>
<dbReference type="Gene3D" id="3.20.20.10">
    <property type="entry name" value="Alanine racemase"/>
    <property type="match status" value="1"/>
</dbReference>
<dbReference type="Gene3D" id="2.40.37.10">
    <property type="entry name" value="Lyase, Ornithine Decarboxylase, Chain A, domain 1"/>
    <property type="match status" value="1"/>
</dbReference>
<dbReference type="InterPro" id="IPR009006">
    <property type="entry name" value="Ala_racemase/Decarboxylase_C"/>
</dbReference>
<dbReference type="InterPro" id="IPR005730">
    <property type="entry name" value="Nsp_de-COase"/>
</dbReference>
<dbReference type="InterPro" id="IPR029066">
    <property type="entry name" value="PLP-binding_barrel"/>
</dbReference>
<dbReference type="NCBIfam" id="TIGR01047">
    <property type="entry name" value="nspC"/>
    <property type="match status" value="1"/>
</dbReference>
<dbReference type="PANTHER" id="PTHR43727:SF1">
    <property type="entry name" value="CARBOXYNORSPERMIDINE_CARBOXYSPERMIDINE DECARBOXYLASE"/>
    <property type="match status" value="1"/>
</dbReference>
<dbReference type="PANTHER" id="PTHR43727">
    <property type="entry name" value="DIAMINOPIMELATE DECARBOXYLASE"/>
    <property type="match status" value="1"/>
</dbReference>
<dbReference type="PIRSF" id="PIRSF038941">
    <property type="entry name" value="NspC"/>
    <property type="match status" value="1"/>
</dbReference>
<dbReference type="SUPFAM" id="SSF50621">
    <property type="entry name" value="Alanine racemase C-terminal domain-like"/>
    <property type="match status" value="1"/>
</dbReference>
<dbReference type="SUPFAM" id="SSF51419">
    <property type="entry name" value="PLP-binding barrel"/>
    <property type="match status" value="1"/>
</dbReference>
<proteinExistence type="evidence at protein level"/>
<gene>
    <name evidence="9" type="primary">nspC</name>
</gene>
<feature type="chain" id="PRO_0000420245" description="Carboxynorspermidine/carboxyspermidine decarboxylase">
    <location>
        <begin position="1"/>
        <end position="377"/>
    </location>
</feature>
<feature type="binding site" evidence="1">
    <location>
        <position position="238"/>
    </location>
    <ligand>
        <name>substrate</name>
    </ligand>
</feature>
<feature type="binding site" evidence="1">
    <location>
        <position position="274"/>
    </location>
    <ligand>
        <name>substrate</name>
    </ligand>
</feature>
<feature type="modified residue" description="N6-(pyridoxal phosphate)lysine" evidence="1">
    <location>
        <position position="41"/>
    </location>
</feature>
<feature type="sequence conflict" description="In Ref. 1; AA sequence." evidence="8" ref="1">
    <original>S</original>
    <variation>M</variation>
    <location>
        <position position="12"/>
    </location>
</feature>
<protein>
    <recommendedName>
        <fullName evidence="6 7 9">Carboxynorspermidine/carboxyspermidine decarboxylase</fullName>
        <shortName evidence="6">CANS DC/CAS DC</shortName>
        <shortName evidence="1">CANSDC/CASDC</shortName>
        <ecNumber evidence="3 4 5">4.1.1.96</ecNumber>
    </recommendedName>
    <alternativeName>
        <fullName evidence="7">C-NSPD decarboxylase</fullName>
    </alternativeName>
</protein>
<name>NSPC_VIBAL</name>
<evidence type="ECO:0000250" key="1">
    <source>
        <dbReference type="UniProtKB" id="A8FNH9"/>
    </source>
</evidence>
<evidence type="ECO:0000255" key="2"/>
<evidence type="ECO:0000269" key="3">
    <source>
    </source>
</evidence>
<evidence type="ECO:0000269" key="4">
    <source>
    </source>
</evidence>
<evidence type="ECO:0000269" key="5">
    <source ref="2"/>
</evidence>
<evidence type="ECO:0000303" key="6">
    <source>
    </source>
</evidence>
<evidence type="ECO:0000303" key="7">
    <source ref="2"/>
</evidence>
<evidence type="ECO:0000305" key="8"/>
<evidence type="ECO:0000312" key="9">
    <source>
        <dbReference type="EMBL" id="BAA06561.1"/>
    </source>
</evidence>
<organism>
    <name type="scientific">Vibrio alginolyticus</name>
    <dbReference type="NCBI Taxonomy" id="663"/>
    <lineage>
        <taxon>Bacteria</taxon>
        <taxon>Pseudomonadati</taxon>
        <taxon>Pseudomonadota</taxon>
        <taxon>Gammaproteobacteria</taxon>
        <taxon>Vibrionales</taxon>
        <taxon>Vibrionaceae</taxon>
        <taxon>Vibrio</taxon>
    </lineage>
</organism>